<name>GDH2_SCHPO</name>
<organism>
    <name type="scientific">Schizosaccharomyces pombe (strain 972 / ATCC 24843)</name>
    <name type="common">Fission yeast</name>
    <dbReference type="NCBI Taxonomy" id="284812"/>
    <lineage>
        <taxon>Eukaryota</taxon>
        <taxon>Fungi</taxon>
        <taxon>Dikarya</taxon>
        <taxon>Ascomycota</taxon>
        <taxon>Taphrinomycotina</taxon>
        <taxon>Schizosaccharomycetes</taxon>
        <taxon>Schizosaccharomycetales</taxon>
        <taxon>Schizosaccharomycetaceae</taxon>
        <taxon>Schizosaccharomyces</taxon>
    </lineage>
</organism>
<feature type="chain" id="PRO_0000310353" description="Probable NAD-specific glutamate dehydrogenase">
    <location>
        <begin position="1"/>
        <end position="1106"/>
    </location>
</feature>
<feature type="active site" evidence="1">
    <location>
        <position position="654"/>
    </location>
</feature>
<sequence length="1106" mass="125712">MYLTKQIPHYSRIHTTQLLTVVNHRTIPFKIRGSFSNCRRYSNFATVPLLERPFKNKSKHNTARASRPFSTQKMLLTKSHPPNMYKDSVFFGYRPIVFSGKQDQKSKVIQCLRTERKTIPDDLVEDEVDRFYNKLGLDDYYFQMEPVSIIADHIEIIYAAKIAAHASHAKEELNIHVKNENEDLAIYLDSSPVTQPELDQSSAVEESISTRYLDPFKLTDPTAYRVESFTSVTNIDRTSTENSNIYTYFVTKCDFVDNPKKDASPDVPTDIASVSDKTFLEKASDNTIEMYQDVMNSVLTRFGPVVRLFDYQGRSEIRLVVGYRRGSIFQYFPSLSKLFRYYGLHSTRTYVEQFSNGVTIISYNFKPELFKNAAVTSINELFSQITREASLLYCLPSTDFQPLFVSEKLSIQEVTYAHCVRIFCEHVMNKLGPEYSSLSAILDHSNNIHAEILETIKRRLSTLAFTRTKIHDTIMQYPGLVHTLFEQFYLEHAINHNSTPHLHRAKSATSLADEASTYSITPMSATALMDLIQKTCTNEEDVSVMEMFVKFNTHLLKTNFFQTTKVALSFRFDPSFLDSTQYKDPLYAMIMSIGNEFRGFHLRFRDVARGGIRLIKSANPEAFGLNARGLFDENYNLAKTQMLKNKDIPEGGAKGVILLGKDCQDKPELAFMKYIDSIIDLLIVNKSQPLVDKLGKPEILFMGPDENTADLVNWATIHAHRRNAPWWKSFFTGKKPTMGGIPHDKYGMTSLSVRCYVEGIYKKLNITDPSKLTKVQTGGPDGDLGSNEIKLSNEKYIAVIDGSGVLYDPAGLDRTELLRLADERKTIDHFDAGKLSPEGYRVLVKDTNLKLPNGEIVRNGTIFRNTAHLRYKADTFVPCGGRPNAININNVEQLIDDHGRPAFKYLVEGANLFITQDAKSVLEKAGVIVIRDASANKGGVTSSSLEVLASLSFDDASFKENMCVHDGKVPTFYADYVNEVKRIIQRNANLEFEAIWKGHSENKIPYTSLSNHLSTEIVKLDHDIYNYEKLWADVGFRNAVLRASIPKTLQAKIGLEKMLERIPESYLRAIFSTYLASRFVYQHVVSSDPFAFFDYISTEMKMLKDA</sequence>
<evidence type="ECO:0000250" key="1"/>
<evidence type="ECO:0000269" key="2">
    <source>
    </source>
</evidence>
<evidence type="ECO:0000305" key="3"/>
<dbReference type="EC" id="1.4.1.2"/>
<dbReference type="EMBL" id="CU329672">
    <property type="protein sequence ID" value="CAB58131.1"/>
    <property type="molecule type" value="Genomic_DNA"/>
</dbReference>
<dbReference type="PIR" id="T40931">
    <property type="entry name" value="T40931"/>
</dbReference>
<dbReference type="RefSeq" id="NP_588149.1">
    <property type="nucleotide sequence ID" value="NM_001023138.2"/>
</dbReference>
<dbReference type="SMR" id="Q9USN5"/>
<dbReference type="BioGRID" id="275720">
    <property type="interactions" value="15"/>
</dbReference>
<dbReference type="FunCoup" id="Q9USN5">
    <property type="interactions" value="244"/>
</dbReference>
<dbReference type="STRING" id="284812.Q9USN5"/>
<dbReference type="iPTMnet" id="Q9USN5"/>
<dbReference type="PaxDb" id="4896-SPCC132.04c.1"/>
<dbReference type="EnsemblFungi" id="SPCC132.04c.1">
    <property type="protein sequence ID" value="SPCC132.04c.1:pep"/>
    <property type="gene ID" value="SPCC132.04c"/>
</dbReference>
<dbReference type="GeneID" id="2539148"/>
<dbReference type="KEGG" id="spo:2539148"/>
<dbReference type="PomBase" id="SPCC132.04c">
    <property type="gene designation" value="gdh2"/>
</dbReference>
<dbReference type="VEuPathDB" id="FungiDB:SPCC132.04c"/>
<dbReference type="eggNOG" id="KOG2250">
    <property type="taxonomic scope" value="Eukaryota"/>
</dbReference>
<dbReference type="HOGENOM" id="CLU_005220_0_0_1"/>
<dbReference type="InParanoid" id="Q9USN5"/>
<dbReference type="OMA" id="DEYGMTS"/>
<dbReference type="PhylomeDB" id="Q9USN5"/>
<dbReference type="PRO" id="PR:Q9USN5"/>
<dbReference type="Proteomes" id="UP000002485">
    <property type="component" value="Chromosome III"/>
</dbReference>
<dbReference type="GO" id="GO:0005829">
    <property type="term" value="C:cytosol"/>
    <property type="evidence" value="ECO:0007005"/>
    <property type="project" value="PomBase"/>
</dbReference>
<dbReference type="GO" id="GO:0005739">
    <property type="term" value="C:mitochondrion"/>
    <property type="evidence" value="ECO:0000318"/>
    <property type="project" value="GO_Central"/>
</dbReference>
<dbReference type="GO" id="GO:0004352">
    <property type="term" value="F:glutamate dehydrogenase (NAD+) activity"/>
    <property type="evidence" value="ECO:0000314"/>
    <property type="project" value="PomBase"/>
</dbReference>
<dbReference type="GO" id="GO:0006538">
    <property type="term" value="P:glutamate catabolic process"/>
    <property type="evidence" value="ECO:0000269"/>
    <property type="project" value="PomBase"/>
</dbReference>
<dbReference type="FunFam" id="3.40.50.720:FF:000429">
    <property type="entry name" value="NAD-specific glutamate dehydrogenase"/>
    <property type="match status" value="1"/>
</dbReference>
<dbReference type="Gene3D" id="3.40.50.720">
    <property type="entry name" value="NAD(P)-binding Rossmann-like Domain"/>
    <property type="match status" value="1"/>
</dbReference>
<dbReference type="InterPro" id="IPR046346">
    <property type="entry name" value="Aminoacid_DH-like_N_sf"/>
</dbReference>
<dbReference type="InterPro" id="IPR006096">
    <property type="entry name" value="Glu/Leu/Phe/Val/Trp_DH_C"/>
</dbReference>
<dbReference type="InterPro" id="IPR036291">
    <property type="entry name" value="NAD(P)-bd_dom_sf"/>
</dbReference>
<dbReference type="InterPro" id="IPR056365">
    <property type="entry name" value="NAD-GDH_2nd"/>
</dbReference>
<dbReference type="InterPro" id="IPR016210">
    <property type="entry name" value="NAD-GDH_euk"/>
</dbReference>
<dbReference type="InterPro" id="IPR055480">
    <property type="entry name" value="NAD-GDH_N"/>
</dbReference>
<dbReference type="PANTHER" id="PTHR11606">
    <property type="entry name" value="GLUTAMATE DEHYDROGENASE"/>
    <property type="match status" value="1"/>
</dbReference>
<dbReference type="PANTHER" id="PTHR11606:SF24">
    <property type="entry name" value="NAD-SPECIFIC GLUTAMATE DEHYDROGENASE"/>
    <property type="match status" value="1"/>
</dbReference>
<dbReference type="Pfam" id="PF00208">
    <property type="entry name" value="ELFV_dehydrog"/>
    <property type="match status" value="1"/>
</dbReference>
<dbReference type="Pfam" id="PF23147">
    <property type="entry name" value="GDH2_N"/>
    <property type="match status" value="1"/>
</dbReference>
<dbReference type="Pfam" id="PF23152">
    <property type="entry name" value="GDH_2nd"/>
    <property type="match status" value="1"/>
</dbReference>
<dbReference type="PIRSF" id="PIRSF000184">
    <property type="entry name" value="GDH_NAD"/>
    <property type="match status" value="1"/>
</dbReference>
<dbReference type="SMART" id="SM00839">
    <property type="entry name" value="ELFV_dehydrog"/>
    <property type="match status" value="1"/>
</dbReference>
<dbReference type="SUPFAM" id="SSF53223">
    <property type="entry name" value="Aminoacid dehydrogenase-like, N-terminal domain"/>
    <property type="match status" value="1"/>
</dbReference>
<dbReference type="SUPFAM" id="SSF51735">
    <property type="entry name" value="NAD(P)-binding Rossmann-fold domains"/>
    <property type="match status" value="1"/>
</dbReference>
<accession>Q9USN5</accession>
<proteinExistence type="inferred from homology"/>
<keyword id="KW-0963">Cytoplasm</keyword>
<keyword id="KW-0520">NAD</keyword>
<keyword id="KW-0560">Oxidoreductase</keyword>
<keyword id="KW-1185">Reference proteome</keyword>
<gene>
    <name type="primary">gdh2</name>
    <name type="ORF">SPCC132.04c</name>
</gene>
<reference key="1">
    <citation type="journal article" date="2002" name="Nature">
        <title>The genome sequence of Schizosaccharomyces pombe.</title>
        <authorList>
            <person name="Wood V."/>
            <person name="Gwilliam R."/>
            <person name="Rajandream M.A."/>
            <person name="Lyne M.H."/>
            <person name="Lyne R."/>
            <person name="Stewart A."/>
            <person name="Sgouros J.G."/>
            <person name="Peat N."/>
            <person name="Hayles J."/>
            <person name="Baker S.G."/>
            <person name="Basham D."/>
            <person name="Bowman S."/>
            <person name="Brooks K."/>
            <person name="Brown D."/>
            <person name="Brown S."/>
            <person name="Chillingworth T."/>
            <person name="Churcher C.M."/>
            <person name="Collins M."/>
            <person name="Connor R."/>
            <person name="Cronin A."/>
            <person name="Davis P."/>
            <person name="Feltwell T."/>
            <person name="Fraser A."/>
            <person name="Gentles S."/>
            <person name="Goble A."/>
            <person name="Hamlin N."/>
            <person name="Harris D.E."/>
            <person name="Hidalgo J."/>
            <person name="Hodgson G."/>
            <person name="Holroyd S."/>
            <person name="Hornsby T."/>
            <person name="Howarth S."/>
            <person name="Huckle E.J."/>
            <person name="Hunt S."/>
            <person name="Jagels K."/>
            <person name="James K.D."/>
            <person name="Jones L."/>
            <person name="Jones M."/>
            <person name="Leather S."/>
            <person name="McDonald S."/>
            <person name="McLean J."/>
            <person name="Mooney P."/>
            <person name="Moule S."/>
            <person name="Mungall K.L."/>
            <person name="Murphy L.D."/>
            <person name="Niblett D."/>
            <person name="Odell C."/>
            <person name="Oliver K."/>
            <person name="O'Neil S."/>
            <person name="Pearson D."/>
            <person name="Quail M.A."/>
            <person name="Rabbinowitsch E."/>
            <person name="Rutherford K.M."/>
            <person name="Rutter S."/>
            <person name="Saunders D."/>
            <person name="Seeger K."/>
            <person name="Sharp S."/>
            <person name="Skelton J."/>
            <person name="Simmonds M.N."/>
            <person name="Squares R."/>
            <person name="Squares S."/>
            <person name="Stevens K."/>
            <person name="Taylor K."/>
            <person name="Taylor R.G."/>
            <person name="Tivey A."/>
            <person name="Walsh S.V."/>
            <person name="Warren T."/>
            <person name="Whitehead S."/>
            <person name="Woodward J.R."/>
            <person name="Volckaert G."/>
            <person name="Aert R."/>
            <person name="Robben J."/>
            <person name="Grymonprez B."/>
            <person name="Weltjens I."/>
            <person name="Vanstreels E."/>
            <person name="Rieger M."/>
            <person name="Schaefer M."/>
            <person name="Mueller-Auer S."/>
            <person name="Gabel C."/>
            <person name="Fuchs M."/>
            <person name="Duesterhoeft A."/>
            <person name="Fritzc C."/>
            <person name="Holzer E."/>
            <person name="Moestl D."/>
            <person name="Hilbert H."/>
            <person name="Borzym K."/>
            <person name="Langer I."/>
            <person name="Beck A."/>
            <person name="Lehrach H."/>
            <person name="Reinhardt R."/>
            <person name="Pohl T.M."/>
            <person name="Eger P."/>
            <person name="Zimmermann W."/>
            <person name="Wedler H."/>
            <person name="Wambutt R."/>
            <person name="Purnelle B."/>
            <person name="Goffeau A."/>
            <person name="Cadieu E."/>
            <person name="Dreano S."/>
            <person name="Gloux S."/>
            <person name="Lelaure V."/>
            <person name="Mottier S."/>
            <person name="Galibert F."/>
            <person name="Aves S.J."/>
            <person name="Xiang Z."/>
            <person name="Hunt C."/>
            <person name="Moore K."/>
            <person name="Hurst S.M."/>
            <person name="Lucas M."/>
            <person name="Rochet M."/>
            <person name="Gaillardin C."/>
            <person name="Tallada V.A."/>
            <person name="Garzon A."/>
            <person name="Thode G."/>
            <person name="Daga R.R."/>
            <person name="Cruzado L."/>
            <person name="Jimenez J."/>
            <person name="Sanchez M."/>
            <person name="del Rey F."/>
            <person name="Benito J."/>
            <person name="Dominguez A."/>
            <person name="Revuelta J.L."/>
            <person name="Moreno S."/>
            <person name="Armstrong J."/>
            <person name="Forsburg S.L."/>
            <person name="Cerutti L."/>
            <person name="Lowe T."/>
            <person name="McCombie W.R."/>
            <person name="Paulsen I."/>
            <person name="Potashkin J."/>
            <person name="Shpakovski G.V."/>
            <person name="Ussery D."/>
            <person name="Barrell B.G."/>
            <person name="Nurse P."/>
        </authorList>
    </citation>
    <scope>NUCLEOTIDE SEQUENCE [LARGE SCALE GENOMIC DNA]</scope>
    <source>
        <strain>972 / ATCC 24843</strain>
    </source>
</reference>
<reference key="2">
    <citation type="journal article" date="2006" name="Nat. Biotechnol.">
        <title>ORFeome cloning and global analysis of protein localization in the fission yeast Schizosaccharomyces pombe.</title>
        <authorList>
            <person name="Matsuyama A."/>
            <person name="Arai R."/>
            <person name="Yashiroda Y."/>
            <person name="Shirai A."/>
            <person name="Kamata A."/>
            <person name="Sekido S."/>
            <person name="Kobayashi Y."/>
            <person name="Hashimoto A."/>
            <person name="Hamamoto M."/>
            <person name="Hiraoka Y."/>
            <person name="Horinouchi S."/>
            <person name="Yoshida M."/>
        </authorList>
    </citation>
    <scope>SUBCELLULAR LOCATION [LARGE SCALE ANALYSIS]</scope>
</reference>
<comment type="function">
    <text evidence="1">NAD(+)-dependent glutamate dehydrogenase which degrades glutamate to ammonia and alpha-ketoglutarate.</text>
</comment>
<comment type="catalytic activity">
    <reaction>
        <text>L-glutamate + NAD(+) + H2O = 2-oxoglutarate + NH4(+) + NADH + H(+)</text>
        <dbReference type="Rhea" id="RHEA:15133"/>
        <dbReference type="ChEBI" id="CHEBI:15377"/>
        <dbReference type="ChEBI" id="CHEBI:15378"/>
        <dbReference type="ChEBI" id="CHEBI:16810"/>
        <dbReference type="ChEBI" id="CHEBI:28938"/>
        <dbReference type="ChEBI" id="CHEBI:29985"/>
        <dbReference type="ChEBI" id="CHEBI:57540"/>
        <dbReference type="ChEBI" id="CHEBI:57945"/>
        <dbReference type="EC" id="1.4.1.2"/>
    </reaction>
</comment>
<comment type="subunit">
    <text evidence="1">Homotetramer.</text>
</comment>
<comment type="subcellular location">
    <subcellularLocation>
        <location evidence="2">Cytoplasm</location>
    </subcellularLocation>
</comment>
<comment type="similarity">
    <text evidence="3">Belongs to the Glu/Leu/Phe/Val dehydrogenases family.</text>
</comment>
<protein>
    <recommendedName>
        <fullName>Probable NAD-specific glutamate dehydrogenase</fullName>
        <shortName>NAD-GDH</shortName>
        <ecNumber>1.4.1.2</ecNumber>
    </recommendedName>
</protein>